<reference key="1">
    <citation type="journal article" date="1991" name="Mol. Cell. Biol.">
        <title>Structure and expression of canary myc family genes.</title>
        <authorList>
            <person name="Collum R.G."/>
            <person name="Clayton D.F."/>
            <person name="Alt F.W."/>
        </authorList>
    </citation>
    <scope>NUCLEOTIDE SEQUENCE [GENOMIC DNA]</scope>
</reference>
<feature type="chain" id="PRO_0000127328" description="N-myc proto-oncogene protein">
    <location>
        <begin position="1"/>
        <end position="427"/>
    </location>
</feature>
<feature type="domain" description="bHLH" evidence="2">
    <location>
        <begin position="343"/>
        <end position="396"/>
    </location>
</feature>
<feature type="region of interest" description="Disordered" evidence="3">
    <location>
        <begin position="45"/>
        <end position="79"/>
    </location>
</feature>
<feature type="region of interest" description="Disordered" evidence="3">
    <location>
        <begin position="144"/>
        <end position="173"/>
    </location>
</feature>
<feature type="region of interest" description="Disordered" evidence="3">
    <location>
        <begin position="195"/>
        <end position="255"/>
    </location>
</feature>
<feature type="region of interest" description="Disordered" evidence="3">
    <location>
        <begin position="297"/>
        <end position="349"/>
    </location>
</feature>
<feature type="region of interest" description="Leucine-zipper">
    <location>
        <begin position="396"/>
        <end position="417"/>
    </location>
</feature>
<feature type="compositionally biased region" description="Pro residues" evidence="3">
    <location>
        <begin position="49"/>
        <end position="61"/>
    </location>
</feature>
<feature type="compositionally biased region" description="Pro residues" evidence="3">
    <location>
        <begin position="152"/>
        <end position="167"/>
    </location>
</feature>
<feature type="compositionally biased region" description="Low complexity" evidence="3">
    <location>
        <begin position="210"/>
        <end position="221"/>
    </location>
</feature>
<feature type="compositionally biased region" description="Acidic residues" evidence="3">
    <location>
        <begin position="222"/>
        <end position="242"/>
    </location>
</feature>
<feature type="modified residue" description="Phosphoserine; by CK2" evidence="1">
    <location>
        <position position="224"/>
    </location>
</feature>
<feature type="modified residue" description="Phosphoserine; by CK2" evidence="1">
    <location>
        <position position="226"/>
    </location>
</feature>
<sequence>MPGMVSKNPDLEFDSLQPCFYPDEDDFYLCGPDSAPPGEDIWKKFELLPTPPLSPSRPAPGAPSGRGPGAVGRSGSVGLPHDPVDWASELLLLPPEADLWGGMDGGDFFETGPGVTNNLNSIIIQDCMWSGFSAREKLERAVTEKLQNKTPAAPPPPPGTAGSPPVPARSGRAVPECVDPAVVFPFPVNKREAPAAEGLRRRRRARGDSRASSSSSSSGDDTLSDSEDDEDEEEEDEEEEIDVVTVEKRRSSTNKSVTTLTITVRPNNTTFSSVRTQQNGLILKRCAPIHQQHNYAAPSPFVETEESPPQKKLKVEVSRPVKPTIQPKLKSSSPRNSDSEDSERRRNHNILERQRANDLRSSFLTLRDHVLSELVQNEKAAKVVILKKATEYVHSLQAEEQKLLLEKEKLQARQEQLLKKIDYKRTC</sequence>
<evidence type="ECO:0000250" key="1"/>
<evidence type="ECO:0000255" key="2">
    <source>
        <dbReference type="PROSITE-ProRule" id="PRU00981"/>
    </source>
</evidence>
<evidence type="ECO:0000256" key="3">
    <source>
        <dbReference type="SAM" id="MobiDB-lite"/>
    </source>
</evidence>
<organism>
    <name type="scientific">Serinus canaria</name>
    <name type="common">Island canary</name>
    <name type="synonym">Fringilla canaria</name>
    <dbReference type="NCBI Taxonomy" id="9135"/>
    <lineage>
        <taxon>Eukaryota</taxon>
        <taxon>Metazoa</taxon>
        <taxon>Chordata</taxon>
        <taxon>Craniata</taxon>
        <taxon>Vertebrata</taxon>
        <taxon>Euteleostomi</taxon>
        <taxon>Archelosauria</taxon>
        <taxon>Archosauria</taxon>
        <taxon>Dinosauria</taxon>
        <taxon>Saurischia</taxon>
        <taxon>Theropoda</taxon>
        <taxon>Coelurosauria</taxon>
        <taxon>Aves</taxon>
        <taxon>Neognathae</taxon>
        <taxon>Neoaves</taxon>
        <taxon>Telluraves</taxon>
        <taxon>Australaves</taxon>
        <taxon>Passeriformes</taxon>
        <taxon>Passeroidea</taxon>
        <taxon>Fringillidae</taxon>
        <taxon>Carduelinae</taxon>
        <taxon>Serinus</taxon>
    </lineage>
</organism>
<accession>P26014</accession>
<protein>
    <recommendedName>
        <fullName>N-myc proto-oncogene protein</fullName>
    </recommendedName>
</protein>
<comment type="subunit">
    <text>Efficient DNA binding requires dimerization with another bHLH protein. Binds DNA as a heterodimer with MAX.</text>
</comment>
<comment type="subcellular location">
    <subcellularLocation>
        <location evidence="2">Nucleus</location>
    </subcellularLocation>
</comment>
<dbReference type="EMBL" id="M64598">
    <property type="protein sequence ID" value="AAA49540.1"/>
    <property type="molecule type" value="Genomic_DNA"/>
</dbReference>
<dbReference type="EMBL" id="M64251">
    <property type="protein sequence ID" value="AAA49540.1"/>
    <property type="status" value="JOINED"/>
    <property type="molecule type" value="Genomic_DNA"/>
</dbReference>
<dbReference type="PIR" id="A39695">
    <property type="entry name" value="A39695"/>
</dbReference>
<dbReference type="SMR" id="P26014"/>
<dbReference type="Proteomes" id="UP000694409">
    <property type="component" value="Unplaced"/>
</dbReference>
<dbReference type="GO" id="GO:0005634">
    <property type="term" value="C:nucleus"/>
    <property type="evidence" value="ECO:0007669"/>
    <property type="project" value="UniProtKB-SubCell"/>
</dbReference>
<dbReference type="GO" id="GO:0003677">
    <property type="term" value="F:DNA binding"/>
    <property type="evidence" value="ECO:0007669"/>
    <property type="project" value="UniProtKB-KW"/>
</dbReference>
<dbReference type="GO" id="GO:0003700">
    <property type="term" value="F:DNA-binding transcription factor activity"/>
    <property type="evidence" value="ECO:0007669"/>
    <property type="project" value="InterPro"/>
</dbReference>
<dbReference type="GO" id="GO:0046983">
    <property type="term" value="F:protein dimerization activity"/>
    <property type="evidence" value="ECO:0007669"/>
    <property type="project" value="InterPro"/>
</dbReference>
<dbReference type="CDD" id="cd11456">
    <property type="entry name" value="bHLHzip_N-Myc_like"/>
    <property type="match status" value="1"/>
</dbReference>
<dbReference type="FunFam" id="4.10.280.10:FF:000019">
    <property type="entry name" value="Myc proto-oncogene protein"/>
    <property type="match status" value="1"/>
</dbReference>
<dbReference type="Gene3D" id="4.10.280.10">
    <property type="entry name" value="Helix-loop-helix DNA-binding domain"/>
    <property type="match status" value="1"/>
</dbReference>
<dbReference type="InterPro" id="IPR011598">
    <property type="entry name" value="bHLH_dom"/>
</dbReference>
<dbReference type="InterPro" id="IPR036638">
    <property type="entry name" value="HLH_DNA-bd_sf"/>
</dbReference>
<dbReference type="InterPro" id="IPR050433">
    <property type="entry name" value="Myc_transcription_factors"/>
</dbReference>
<dbReference type="InterPro" id="IPR002418">
    <property type="entry name" value="Tscrpt_reg_Myc"/>
</dbReference>
<dbReference type="InterPro" id="IPR012682">
    <property type="entry name" value="Tscrpt_reg_Myc_N"/>
</dbReference>
<dbReference type="PANTHER" id="PTHR45851">
    <property type="entry name" value="MYC PROTO-ONCOGENE"/>
    <property type="match status" value="1"/>
</dbReference>
<dbReference type="Pfam" id="PF00010">
    <property type="entry name" value="HLH"/>
    <property type="match status" value="1"/>
</dbReference>
<dbReference type="Pfam" id="PF01056">
    <property type="entry name" value="Myc_N"/>
    <property type="match status" value="1"/>
</dbReference>
<dbReference type="PIRSF" id="PIRSF001705">
    <property type="entry name" value="Myc_protein"/>
    <property type="match status" value="1"/>
</dbReference>
<dbReference type="PRINTS" id="PR00044">
    <property type="entry name" value="LEUZIPPRMYC"/>
</dbReference>
<dbReference type="SMART" id="SM00353">
    <property type="entry name" value="HLH"/>
    <property type="match status" value="1"/>
</dbReference>
<dbReference type="SUPFAM" id="SSF47459">
    <property type="entry name" value="HLH, helix-loop-helix DNA-binding domain"/>
    <property type="match status" value="1"/>
</dbReference>
<dbReference type="PROSITE" id="PS50888">
    <property type="entry name" value="BHLH"/>
    <property type="match status" value="1"/>
</dbReference>
<name>MYCN_SERCA</name>
<gene>
    <name type="primary">MYCN</name>
</gene>
<keyword id="KW-0238">DNA-binding</keyword>
<keyword id="KW-0539">Nucleus</keyword>
<keyword id="KW-0597">Phosphoprotein</keyword>
<keyword id="KW-0656">Proto-oncogene</keyword>
<keyword id="KW-1185">Reference proteome</keyword>
<proteinExistence type="inferred from homology"/>